<dbReference type="EMBL" id="AY261360">
    <property type="status" value="NOT_ANNOTATED_CDS"/>
    <property type="molecule type" value="Genomic_DNA"/>
</dbReference>
<dbReference type="Proteomes" id="UP000000861">
    <property type="component" value="Segment"/>
</dbReference>
<dbReference type="GO" id="GO:0044167">
    <property type="term" value="C:host cell endoplasmic reticulum membrane"/>
    <property type="evidence" value="ECO:0007669"/>
    <property type="project" value="UniProtKB-SubCell"/>
</dbReference>
<dbReference type="GO" id="GO:0044178">
    <property type="term" value="C:host cell Golgi membrane"/>
    <property type="evidence" value="ECO:0007669"/>
    <property type="project" value="UniProtKB-SubCell"/>
</dbReference>
<dbReference type="GO" id="GO:0016020">
    <property type="term" value="C:membrane"/>
    <property type="evidence" value="ECO:0007669"/>
    <property type="project" value="UniProtKB-KW"/>
</dbReference>
<dbReference type="Gene3D" id="3.80.10.10">
    <property type="entry name" value="Ribonuclease Inhibitor"/>
    <property type="match status" value="1"/>
</dbReference>
<dbReference type="InterPro" id="IPR032675">
    <property type="entry name" value="LRR_dom_sf"/>
</dbReference>
<dbReference type="SUPFAM" id="SSF52058">
    <property type="entry name" value="L domain-like"/>
    <property type="match status" value="1"/>
</dbReference>
<name>I329L_ASFK5</name>
<sequence>MLRVFIFFVFLGSGLAGKVKSPITCKYFISKNNTWYKYNVTILNDTIILPAYNTIPTNATGISCTCHDIDYLQKNNISIRYNTSILKTFQDIRIIRCGMKNISEIAAGFSKELKFLDLRYNDLQFIEYNILRKLIRSNTPTYLYYNNLMCGKRNCPLYYFLLKQEQTYLKLLPQFFLRRISFSNNHTYLYHFLSCGNKPGHEFLEYQTKFCRTKFPEINITVNQLIAKKNTERYKNCYPFVLVSIICSCISSLFLLICLLRTICKKYSCTKQGKTTHSYIPLIPSYTFSLKKHRHPETAVVEDHASTANSPIVYIPTTEEKKVSCSRRK</sequence>
<feature type="signal peptide" evidence="1">
    <location>
        <begin position="1"/>
        <end position="31"/>
    </location>
</feature>
<feature type="chain" id="PRO_0000373649" description="Transmembrane protein I329L">
    <location>
        <begin position="32"/>
        <end position="329"/>
    </location>
</feature>
<feature type="topological domain" description="Extracellular" evidence="3">
    <location>
        <begin position="32"/>
        <end position="239"/>
    </location>
</feature>
<feature type="transmembrane region" description="Helical" evidence="3">
    <location>
        <begin position="240"/>
        <end position="260"/>
    </location>
</feature>
<feature type="topological domain" description="Cytoplasmic">
    <location>
        <begin position="261"/>
        <end position="329"/>
    </location>
</feature>
<feature type="glycosylation site" description="N-linked (GlcNAc...) asparagine; by host" evidence="3">
    <location>
        <position position="32"/>
    </location>
</feature>
<feature type="glycosylation site" description="N-linked (GlcNAc...) asparagine; by host" evidence="3">
    <location>
        <position position="39"/>
    </location>
</feature>
<feature type="glycosylation site" description="N-linked (GlcNAc...) asparagine; by host" evidence="3">
    <location>
        <position position="44"/>
    </location>
</feature>
<feature type="glycosylation site" description="N-linked (GlcNAc...) asparagine; by host" evidence="3">
    <location>
        <position position="58"/>
    </location>
</feature>
<feature type="glycosylation site" description="N-linked (GlcNAc...) asparagine; by host" evidence="3">
    <location>
        <position position="76"/>
    </location>
</feature>
<feature type="glycosylation site" description="N-linked (GlcNAc...) asparagine; by host" evidence="3">
    <location>
        <position position="82"/>
    </location>
</feature>
<feature type="glycosylation site" description="N-linked (GlcNAc...) asparagine; by host" evidence="3">
    <location>
        <position position="101"/>
    </location>
</feature>
<feature type="glycosylation site" description="N-linked (GlcNAc...) asparagine; by host" evidence="3">
    <location>
        <position position="185"/>
    </location>
</feature>
<feature type="glycosylation site" description="N-linked (GlcNAc...) asparagine; by host" evidence="3">
    <location>
        <position position="219"/>
    </location>
</feature>
<accession>P0CAE3</accession>
<organismHost>
    <name type="scientific">Ornithodoros</name>
    <name type="common">relapsing fever ticks</name>
    <dbReference type="NCBI Taxonomy" id="6937"/>
</organismHost>
<organismHost>
    <name type="scientific">Phacochoerus aethiopicus</name>
    <name type="common">Warthog</name>
    <dbReference type="NCBI Taxonomy" id="85517"/>
</organismHost>
<organismHost>
    <name type="scientific">Phacochoerus africanus</name>
    <name type="common">Warthog</name>
    <dbReference type="NCBI Taxonomy" id="41426"/>
</organismHost>
<organismHost>
    <name type="scientific">Potamochoerus larvatus</name>
    <name type="common">Bushpig</name>
    <dbReference type="NCBI Taxonomy" id="273792"/>
</organismHost>
<organismHost>
    <name type="scientific">Sus scrofa</name>
    <name type="common">Pig</name>
    <dbReference type="NCBI Taxonomy" id="9823"/>
</organismHost>
<evidence type="ECO:0000250" key="1">
    <source>
        <dbReference type="UniProtKB" id="A9JM73"/>
    </source>
</evidence>
<evidence type="ECO:0000250" key="2">
    <source>
        <dbReference type="UniProtKB" id="P27945"/>
    </source>
</evidence>
<evidence type="ECO:0000255" key="3"/>
<evidence type="ECO:0000305" key="4"/>
<gene>
    <name type="ordered locus">Ken-153</name>
</gene>
<proteinExistence type="inferred from homology"/>
<comment type="function">
    <text evidence="2">Viral TLR3 homolog that probably prevents TLR3 dimerization and subsequent induction of IFN (By similarity). Inhibits dsRNA-stimulated activation of NF-kB and IRF3 (By similarity).</text>
</comment>
<comment type="subcellular location">
    <subcellularLocation>
        <location evidence="2">Host endoplasmic reticulum membrane</location>
        <topology evidence="4">Single-pass type I membrane protein</topology>
    </subcellularLocation>
    <subcellularLocation>
        <location>Host Golgi apparatus membrane</location>
        <topology evidence="4">Single-pass type I membrane protein</topology>
    </subcellularLocation>
</comment>
<comment type="induction">
    <text evidence="4">Expressed in the late phase of the viral replicative cycle.</text>
</comment>
<comment type="domain">
    <text evidence="2">Contains putative leucine-rich repeats (LRR) and a C-terminus cysteine-rich capping motif similar to domain structure of host TLR3.</text>
</comment>
<comment type="PTM">
    <text evidence="2">Highly glycosylated.</text>
</comment>
<comment type="similarity">
    <text evidence="4">Belongs to the asfivirus I329L family.</text>
</comment>
<reference key="1">
    <citation type="submission" date="2003-03" db="EMBL/GenBank/DDBJ databases">
        <title>African swine fever virus genomes.</title>
        <authorList>
            <person name="Kutish G.F."/>
            <person name="Rock D.L."/>
        </authorList>
    </citation>
    <scope>NUCLEOTIDE SEQUENCE [LARGE SCALE GENOMIC DNA]</scope>
</reference>
<keyword id="KW-0325">Glycoprotein</keyword>
<keyword id="KW-1038">Host endoplasmic reticulum</keyword>
<keyword id="KW-1040">Host Golgi apparatus</keyword>
<keyword id="KW-1043">Host membrane</keyword>
<keyword id="KW-0426">Late protein</keyword>
<keyword id="KW-0472">Membrane</keyword>
<keyword id="KW-0732">Signal</keyword>
<keyword id="KW-0812">Transmembrane</keyword>
<keyword id="KW-1133">Transmembrane helix</keyword>
<protein>
    <recommendedName>
        <fullName>Transmembrane protein I329L</fullName>
    </recommendedName>
</protein>
<organism>
    <name type="scientific">African swine fever virus (isolate Pig/Kenya/KEN-50/1950)</name>
    <name type="common">ASFV</name>
    <dbReference type="NCBI Taxonomy" id="561445"/>
    <lineage>
        <taxon>Viruses</taxon>
        <taxon>Varidnaviria</taxon>
        <taxon>Bamfordvirae</taxon>
        <taxon>Nucleocytoviricota</taxon>
        <taxon>Pokkesviricetes</taxon>
        <taxon>Asfuvirales</taxon>
        <taxon>Asfarviridae</taxon>
        <taxon>Asfivirus</taxon>
        <taxon>African swine fever virus</taxon>
    </lineage>
</organism>